<evidence type="ECO:0000255" key="1">
    <source>
        <dbReference type="HAMAP-Rule" id="MF_01321"/>
    </source>
</evidence>
<comment type="function">
    <text evidence="1">DNA-dependent RNA polymerase catalyzes the transcription of DNA into RNA using the four ribonucleoside triphosphates as substrates.</text>
</comment>
<comment type="catalytic activity">
    <reaction evidence="1">
        <text>RNA(n) + a ribonucleoside 5'-triphosphate = RNA(n+1) + diphosphate</text>
        <dbReference type="Rhea" id="RHEA:21248"/>
        <dbReference type="Rhea" id="RHEA-COMP:14527"/>
        <dbReference type="Rhea" id="RHEA-COMP:17342"/>
        <dbReference type="ChEBI" id="CHEBI:33019"/>
        <dbReference type="ChEBI" id="CHEBI:61557"/>
        <dbReference type="ChEBI" id="CHEBI:140395"/>
        <dbReference type="EC" id="2.7.7.6"/>
    </reaction>
</comment>
<comment type="subunit">
    <text evidence="1">The RNAP catalytic core consists of 2 alpha, 1 beta, 1 beta' and 1 omega subunit. When a sigma factor is associated with the core the holoenzyme is formed, which can initiate transcription.</text>
</comment>
<comment type="similarity">
    <text evidence="1">Belongs to the RNA polymerase beta chain family.</text>
</comment>
<dbReference type="EC" id="2.7.7.6" evidence="1"/>
<dbReference type="EMBL" id="CP000377">
    <property type="protein sequence ID" value="ABF62967.1"/>
    <property type="molecule type" value="Genomic_DNA"/>
</dbReference>
<dbReference type="RefSeq" id="WP_011537599.1">
    <property type="nucleotide sequence ID" value="NC_008044.1"/>
</dbReference>
<dbReference type="SMR" id="Q1GK49"/>
<dbReference type="STRING" id="292414.TM1040_0234"/>
<dbReference type="KEGG" id="sit:TM1040_0234"/>
<dbReference type="eggNOG" id="COG0085">
    <property type="taxonomic scope" value="Bacteria"/>
</dbReference>
<dbReference type="HOGENOM" id="CLU_000524_4_0_5"/>
<dbReference type="OrthoDB" id="9803954at2"/>
<dbReference type="Proteomes" id="UP000000636">
    <property type="component" value="Chromosome"/>
</dbReference>
<dbReference type="GO" id="GO:0000428">
    <property type="term" value="C:DNA-directed RNA polymerase complex"/>
    <property type="evidence" value="ECO:0007669"/>
    <property type="project" value="UniProtKB-KW"/>
</dbReference>
<dbReference type="GO" id="GO:0003677">
    <property type="term" value="F:DNA binding"/>
    <property type="evidence" value="ECO:0007669"/>
    <property type="project" value="UniProtKB-UniRule"/>
</dbReference>
<dbReference type="GO" id="GO:0003899">
    <property type="term" value="F:DNA-directed RNA polymerase activity"/>
    <property type="evidence" value="ECO:0007669"/>
    <property type="project" value="UniProtKB-UniRule"/>
</dbReference>
<dbReference type="GO" id="GO:0032549">
    <property type="term" value="F:ribonucleoside binding"/>
    <property type="evidence" value="ECO:0007669"/>
    <property type="project" value="InterPro"/>
</dbReference>
<dbReference type="GO" id="GO:0006351">
    <property type="term" value="P:DNA-templated transcription"/>
    <property type="evidence" value="ECO:0007669"/>
    <property type="project" value="UniProtKB-UniRule"/>
</dbReference>
<dbReference type="CDD" id="cd00653">
    <property type="entry name" value="RNA_pol_B_RPB2"/>
    <property type="match status" value="1"/>
</dbReference>
<dbReference type="FunFam" id="2.40.50.100:FF:000006">
    <property type="entry name" value="DNA-directed RNA polymerase subunit beta"/>
    <property type="match status" value="1"/>
</dbReference>
<dbReference type="FunFam" id="3.90.1800.10:FF:000001">
    <property type="entry name" value="DNA-directed RNA polymerase subunit beta"/>
    <property type="match status" value="1"/>
</dbReference>
<dbReference type="Gene3D" id="2.40.50.100">
    <property type="match status" value="1"/>
</dbReference>
<dbReference type="Gene3D" id="2.40.50.150">
    <property type="match status" value="1"/>
</dbReference>
<dbReference type="Gene3D" id="3.90.1100.10">
    <property type="match status" value="2"/>
</dbReference>
<dbReference type="Gene3D" id="2.30.150.10">
    <property type="entry name" value="DNA-directed RNA polymerase, beta subunit, external 1 domain"/>
    <property type="match status" value="1"/>
</dbReference>
<dbReference type="Gene3D" id="2.40.270.10">
    <property type="entry name" value="DNA-directed RNA polymerase, subunit 2, domain 6"/>
    <property type="match status" value="1"/>
</dbReference>
<dbReference type="Gene3D" id="3.90.1800.10">
    <property type="entry name" value="RNA polymerase alpha subunit dimerisation domain"/>
    <property type="match status" value="1"/>
</dbReference>
<dbReference type="Gene3D" id="3.90.1110.10">
    <property type="entry name" value="RNA polymerase Rpb2, domain 2"/>
    <property type="match status" value="1"/>
</dbReference>
<dbReference type="HAMAP" id="MF_01321">
    <property type="entry name" value="RNApol_bact_RpoB"/>
    <property type="match status" value="1"/>
</dbReference>
<dbReference type="InterPro" id="IPR042107">
    <property type="entry name" value="DNA-dir_RNA_pol_bsu_ext_1_sf"/>
</dbReference>
<dbReference type="InterPro" id="IPR019462">
    <property type="entry name" value="DNA-dir_RNA_pol_bsu_external_1"/>
</dbReference>
<dbReference type="InterPro" id="IPR015712">
    <property type="entry name" value="DNA-dir_RNA_pol_su2"/>
</dbReference>
<dbReference type="InterPro" id="IPR007120">
    <property type="entry name" value="DNA-dir_RNAP_su2_dom"/>
</dbReference>
<dbReference type="InterPro" id="IPR037033">
    <property type="entry name" value="DNA-dir_RNAP_su2_hyb_sf"/>
</dbReference>
<dbReference type="InterPro" id="IPR010243">
    <property type="entry name" value="RNA_pol_bsu_bac"/>
</dbReference>
<dbReference type="InterPro" id="IPR007121">
    <property type="entry name" value="RNA_pol_bsu_CS"/>
</dbReference>
<dbReference type="InterPro" id="IPR007644">
    <property type="entry name" value="RNA_pol_bsu_protrusion"/>
</dbReference>
<dbReference type="InterPro" id="IPR007642">
    <property type="entry name" value="RNA_pol_Rpb2_2"/>
</dbReference>
<dbReference type="InterPro" id="IPR037034">
    <property type="entry name" value="RNA_pol_Rpb2_2_sf"/>
</dbReference>
<dbReference type="InterPro" id="IPR007645">
    <property type="entry name" value="RNA_pol_Rpb2_3"/>
</dbReference>
<dbReference type="InterPro" id="IPR007641">
    <property type="entry name" value="RNA_pol_Rpb2_7"/>
</dbReference>
<dbReference type="InterPro" id="IPR014724">
    <property type="entry name" value="RNA_pol_RPB2_OB-fold"/>
</dbReference>
<dbReference type="NCBIfam" id="NF001616">
    <property type="entry name" value="PRK00405.1"/>
    <property type="match status" value="1"/>
</dbReference>
<dbReference type="NCBIfam" id="TIGR02013">
    <property type="entry name" value="rpoB"/>
    <property type="match status" value="1"/>
</dbReference>
<dbReference type="PANTHER" id="PTHR20856">
    <property type="entry name" value="DNA-DIRECTED RNA POLYMERASE I SUBUNIT 2"/>
    <property type="match status" value="1"/>
</dbReference>
<dbReference type="Pfam" id="PF04563">
    <property type="entry name" value="RNA_pol_Rpb2_1"/>
    <property type="match status" value="1"/>
</dbReference>
<dbReference type="Pfam" id="PF04561">
    <property type="entry name" value="RNA_pol_Rpb2_2"/>
    <property type="match status" value="2"/>
</dbReference>
<dbReference type="Pfam" id="PF04565">
    <property type="entry name" value="RNA_pol_Rpb2_3"/>
    <property type="match status" value="1"/>
</dbReference>
<dbReference type="Pfam" id="PF10385">
    <property type="entry name" value="RNA_pol_Rpb2_45"/>
    <property type="match status" value="1"/>
</dbReference>
<dbReference type="Pfam" id="PF00562">
    <property type="entry name" value="RNA_pol_Rpb2_6"/>
    <property type="match status" value="1"/>
</dbReference>
<dbReference type="Pfam" id="PF04560">
    <property type="entry name" value="RNA_pol_Rpb2_7"/>
    <property type="match status" value="1"/>
</dbReference>
<dbReference type="SUPFAM" id="SSF64484">
    <property type="entry name" value="beta and beta-prime subunits of DNA dependent RNA-polymerase"/>
    <property type="match status" value="1"/>
</dbReference>
<dbReference type="PROSITE" id="PS01166">
    <property type="entry name" value="RNA_POL_BETA"/>
    <property type="match status" value="1"/>
</dbReference>
<name>RPOB_RUEST</name>
<keyword id="KW-0240">DNA-directed RNA polymerase</keyword>
<keyword id="KW-0548">Nucleotidyltransferase</keyword>
<keyword id="KW-1185">Reference proteome</keyword>
<keyword id="KW-0804">Transcription</keyword>
<keyword id="KW-0808">Transferase</keyword>
<gene>
    <name evidence="1" type="primary">rpoB</name>
    <name type="ordered locus">TM1040_0234</name>
</gene>
<organism>
    <name type="scientific">Ruegeria sp. (strain TM1040)</name>
    <name type="common">Silicibacter sp.</name>
    <dbReference type="NCBI Taxonomy" id="292414"/>
    <lineage>
        <taxon>Bacteria</taxon>
        <taxon>Pseudomonadati</taxon>
        <taxon>Pseudomonadota</taxon>
        <taxon>Alphaproteobacteria</taxon>
        <taxon>Rhodobacterales</taxon>
        <taxon>Roseobacteraceae</taxon>
        <taxon>Ruegeria</taxon>
    </lineage>
</organism>
<sequence>MAQTFLGQKRLRKYYGKIREVLDMPNLIEVQKSSYDLFLRSGDAPQPLDGEGIKGVFQSVFPIKDFNETSVLEFVNYALERPKYDVDECMQRDMTYSAPLKVTLRLIVFDVDEDTGAKSVKDIKEQDVFMGDMPLMTPNGTFIVNGTERVIVSQMHRSPGVFFDHDKGKTHSSGKLLFACRIIPYRGSWLDFEFDAKDIVFARIDRRRKLPVTTLLYALGLDQEGIMDAYYNTVNFKLEKSRGWVTPFFPERVRGTRPTYDLVDAATGEIICEAGKKVTPRAVKKMIDEGNITELLVPFEHIVGKYVAKDIINEENGAIYVEAGDELTLEYDKDGDIIGGSVKELLDAGITDIPVLDIDNVNVGPYMRNTMAQDKNMSRETALMDIYRVMRPGEPPTVEAASALFDTLFFDSERYDLSAVGRVKMNMRLALDAEDTQRTLRKEDIVACIKALVELRDGKGDVDDIDHLGNRRVRSVGELMENQYRVGLLRMERAIKERMSSVEIDTVMPQDLINAKPAAAAVREFFGSSQLSQFMDQTNPLSEVTHKRRLSALGPGGLTRERAGFEVRDVHPTHYGRMCPIETPEGPNIGLINSLATFARVNKYGFIETPYRVVKDGQVTDEVHYMSATEEMRHTVAQANANLDEDNRFVNDLVSTRQSGDYTLAPNESVDLIDVSPKQLVSVAASLIPFLENDDANRALMGSNMQRQAVPLLRAEAPLVGTGIEEIVARDSGAAIMAKRAGVIDQIDAQRIVIRATSDLELGDAGVDIYRMRKFQRSNQNTCINQRPLVKVGQTVEKGEVIADGPSTDMGELALGKNVVVAFMPWNGYNYEDSILISERIARDDVFTSIHIEEFEVAARDTKLGPEEITRDIPNVGEEALRNLDEAGIVYIGADVEPGDILVGKITPKGESPMTPEEKLLRAIFGEKASDVRDTSLRVKPGDYGTVVEVRVFNRHGVEKDERALQIEREEVERLARDRDDELGILDRNIYARLRDLLLGKTAVKGPKGVRGNTVIDEDLLDNQLTRGQWWMLALEEEQDAQILEALNEQYEAQKRALDARFEDKVEKVRRGDDLPPGVMKMVKVFIAVKRKLQPGDKMAGRHGNKGVISRVVPMEDMPFLADGTPVDFCLNPLGVPSRMNVGQILETHMGWAARGLGLKIDDALQDYRRTGDLTPVRDAMREAYGEDVYEEGISSMDETQLIEAAGNVTRGVPIATPVFDGAKEDDVNDALVRAGFDQSGQSILFDGRTGEQFARPVTVGIKYLLKLHHLVDDKIHARSTGPYSLVTQQPLGGKAQFGGQRFGEMEVWALEAYGAAYTLQEMLTVKSDDVAGRTKVYESIVKGEDNFEAGVPESFNVLVKEVRGLGLNMELLDAEVEE</sequence>
<proteinExistence type="inferred from homology"/>
<protein>
    <recommendedName>
        <fullName evidence="1">DNA-directed RNA polymerase subunit beta</fullName>
        <shortName evidence="1">RNAP subunit beta</shortName>
        <ecNumber evidence="1">2.7.7.6</ecNumber>
    </recommendedName>
    <alternativeName>
        <fullName evidence="1">RNA polymerase subunit beta</fullName>
    </alternativeName>
    <alternativeName>
        <fullName evidence="1">Transcriptase subunit beta</fullName>
    </alternativeName>
</protein>
<feature type="chain" id="PRO_0000300405" description="DNA-directed RNA polymerase subunit beta">
    <location>
        <begin position="1"/>
        <end position="1379"/>
    </location>
</feature>
<reference key="1">
    <citation type="submission" date="2006-05" db="EMBL/GenBank/DDBJ databases">
        <title>Complete sequence of chromosome of Silicibacter sp. TM1040.</title>
        <authorList>
            <consortium name="US DOE Joint Genome Institute"/>
            <person name="Copeland A."/>
            <person name="Lucas S."/>
            <person name="Lapidus A."/>
            <person name="Barry K."/>
            <person name="Detter J.C."/>
            <person name="Glavina del Rio T."/>
            <person name="Hammon N."/>
            <person name="Israni S."/>
            <person name="Dalin E."/>
            <person name="Tice H."/>
            <person name="Pitluck S."/>
            <person name="Brettin T."/>
            <person name="Bruce D."/>
            <person name="Han C."/>
            <person name="Tapia R."/>
            <person name="Goodwin L."/>
            <person name="Thompson L.S."/>
            <person name="Gilna P."/>
            <person name="Schmutz J."/>
            <person name="Larimer F."/>
            <person name="Land M."/>
            <person name="Hauser L."/>
            <person name="Kyrpides N."/>
            <person name="Kim E."/>
            <person name="Belas R."/>
            <person name="Moran M.A."/>
            <person name="Buchan A."/>
            <person name="Gonzalez J.M."/>
            <person name="Schell M.A."/>
            <person name="Sun F."/>
            <person name="Richardson P."/>
        </authorList>
    </citation>
    <scope>NUCLEOTIDE SEQUENCE [LARGE SCALE GENOMIC DNA]</scope>
    <source>
        <strain>TM1040</strain>
    </source>
</reference>
<accession>Q1GK49</accession>